<reference key="1">
    <citation type="journal article" date="2010" name="J. Bacteriol.">
        <title>Whole genome sequences of two Xylella fastidiosa strains (M12 and M23) causing almond leaf scorch disease in California.</title>
        <authorList>
            <person name="Chen J."/>
            <person name="Xie G."/>
            <person name="Han S."/>
            <person name="Chertkov O."/>
            <person name="Sims D."/>
            <person name="Civerolo E.L."/>
        </authorList>
    </citation>
    <scope>NUCLEOTIDE SEQUENCE [LARGE SCALE GENOMIC DNA]</scope>
    <source>
        <strain>M23</strain>
    </source>
</reference>
<dbReference type="EC" id="4.1.1.19" evidence="1"/>
<dbReference type="EMBL" id="CP001011">
    <property type="protein sequence ID" value="ACB91563.1"/>
    <property type="molecule type" value="Genomic_DNA"/>
</dbReference>
<dbReference type="RefSeq" id="WP_004087585.1">
    <property type="nucleotide sequence ID" value="NC_010577.1"/>
</dbReference>
<dbReference type="SMR" id="B2I6M1"/>
<dbReference type="GeneID" id="93903804"/>
<dbReference type="KEGG" id="xfn:XfasM23_0106"/>
<dbReference type="HOGENOM" id="CLU_027243_1_0_6"/>
<dbReference type="UniPathway" id="UPA00186">
    <property type="reaction ID" value="UER00284"/>
</dbReference>
<dbReference type="Proteomes" id="UP000001698">
    <property type="component" value="Chromosome"/>
</dbReference>
<dbReference type="GO" id="GO:0008792">
    <property type="term" value="F:arginine decarboxylase activity"/>
    <property type="evidence" value="ECO:0007669"/>
    <property type="project" value="UniProtKB-UniRule"/>
</dbReference>
<dbReference type="GO" id="GO:0046872">
    <property type="term" value="F:metal ion binding"/>
    <property type="evidence" value="ECO:0007669"/>
    <property type="project" value="UniProtKB-KW"/>
</dbReference>
<dbReference type="GO" id="GO:0006527">
    <property type="term" value="P:arginine catabolic process"/>
    <property type="evidence" value="ECO:0007669"/>
    <property type="project" value="InterPro"/>
</dbReference>
<dbReference type="GO" id="GO:0033388">
    <property type="term" value="P:putrescine biosynthetic process from arginine"/>
    <property type="evidence" value="ECO:0007669"/>
    <property type="project" value="TreeGrafter"/>
</dbReference>
<dbReference type="GO" id="GO:0008295">
    <property type="term" value="P:spermidine biosynthetic process"/>
    <property type="evidence" value="ECO:0007669"/>
    <property type="project" value="UniProtKB-UniRule"/>
</dbReference>
<dbReference type="CDD" id="cd06830">
    <property type="entry name" value="PLPDE_III_ADC"/>
    <property type="match status" value="1"/>
</dbReference>
<dbReference type="FunFam" id="3.20.20.10:FF:000001">
    <property type="entry name" value="Biosynthetic arginine decarboxylase"/>
    <property type="match status" value="1"/>
</dbReference>
<dbReference type="Gene3D" id="1.10.287.3440">
    <property type="match status" value="1"/>
</dbReference>
<dbReference type="Gene3D" id="1.20.58.930">
    <property type="match status" value="1"/>
</dbReference>
<dbReference type="Gene3D" id="3.20.20.10">
    <property type="entry name" value="Alanine racemase"/>
    <property type="match status" value="1"/>
</dbReference>
<dbReference type="Gene3D" id="2.40.37.10">
    <property type="entry name" value="Lyase, Ornithine Decarboxylase, Chain A, domain 1"/>
    <property type="match status" value="1"/>
</dbReference>
<dbReference type="HAMAP" id="MF_01417">
    <property type="entry name" value="SpeA"/>
    <property type="match status" value="1"/>
</dbReference>
<dbReference type="InterPro" id="IPR009006">
    <property type="entry name" value="Ala_racemase/Decarboxylase_C"/>
</dbReference>
<dbReference type="InterPro" id="IPR040634">
    <property type="entry name" value="Arg_decarb_HB"/>
</dbReference>
<dbReference type="InterPro" id="IPR041128">
    <property type="entry name" value="Arg_decarbox_C"/>
</dbReference>
<dbReference type="InterPro" id="IPR002985">
    <property type="entry name" value="Arg_decrbxlase"/>
</dbReference>
<dbReference type="InterPro" id="IPR022657">
    <property type="entry name" value="De-COase2_CS"/>
</dbReference>
<dbReference type="InterPro" id="IPR022644">
    <property type="entry name" value="De-COase2_N"/>
</dbReference>
<dbReference type="InterPro" id="IPR000183">
    <property type="entry name" value="Orn/DAP/Arg_de-COase"/>
</dbReference>
<dbReference type="InterPro" id="IPR029066">
    <property type="entry name" value="PLP-binding_barrel"/>
</dbReference>
<dbReference type="NCBIfam" id="NF003763">
    <property type="entry name" value="PRK05354.1"/>
    <property type="match status" value="1"/>
</dbReference>
<dbReference type="NCBIfam" id="TIGR01273">
    <property type="entry name" value="speA"/>
    <property type="match status" value="1"/>
</dbReference>
<dbReference type="PANTHER" id="PTHR43295">
    <property type="entry name" value="ARGININE DECARBOXYLASE"/>
    <property type="match status" value="1"/>
</dbReference>
<dbReference type="PANTHER" id="PTHR43295:SF9">
    <property type="entry name" value="BIOSYNTHETIC ARGININE DECARBOXYLASE"/>
    <property type="match status" value="1"/>
</dbReference>
<dbReference type="Pfam" id="PF17810">
    <property type="entry name" value="Arg_decarb_HB"/>
    <property type="match status" value="1"/>
</dbReference>
<dbReference type="Pfam" id="PF17944">
    <property type="entry name" value="Arg_decarbox_C"/>
    <property type="match status" value="1"/>
</dbReference>
<dbReference type="Pfam" id="PF02784">
    <property type="entry name" value="Orn_Arg_deC_N"/>
    <property type="match status" value="1"/>
</dbReference>
<dbReference type="PIRSF" id="PIRSF001336">
    <property type="entry name" value="Arg_decrbxlase"/>
    <property type="match status" value="1"/>
</dbReference>
<dbReference type="PRINTS" id="PR01180">
    <property type="entry name" value="ARGDCRBXLASE"/>
</dbReference>
<dbReference type="PRINTS" id="PR01179">
    <property type="entry name" value="ODADCRBXLASE"/>
</dbReference>
<dbReference type="SUPFAM" id="SSF50621">
    <property type="entry name" value="Alanine racemase C-terminal domain-like"/>
    <property type="match status" value="1"/>
</dbReference>
<dbReference type="SUPFAM" id="SSF51419">
    <property type="entry name" value="PLP-binding barrel"/>
    <property type="match status" value="1"/>
</dbReference>
<dbReference type="PROSITE" id="PS00879">
    <property type="entry name" value="ODR_DC_2_2"/>
    <property type="match status" value="1"/>
</dbReference>
<proteinExistence type="inferred from homology"/>
<name>SPEA_XYLF2</name>
<gene>
    <name evidence="1" type="primary">speA</name>
    <name type="ordered locus">XfasM23_0106</name>
</gene>
<keyword id="KW-0210">Decarboxylase</keyword>
<keyword id="KW-0456">Lyase</keyword>
<keyword id="KW-0460">Magnesium</keyword>
<keyword id="KW-0479">Metal-binding</keyword>
<keyword id="KW-0620">Polyamine biosynthesis</keyword>
<keyword id="KW-0663">Pyridoxal phosphate</keyword>
<keyword id="KW-0745">Spermidine biosynthesis</keyword>
<accession>B2I6M1</accession>
<organism>
    <name type="scientific">Xylella fastidiosa (strain M23)</name>
    <dbReference type="NCBI Taxonomy" id="405441"/>
    <lineage>
        <taxon>Bacteria</taxon>
        <taxon>Pseudomonadati</taxon>
        <taxon>Pseudomonadota</taxon>
        <taxon>Gammaproteobacteria</taxon>
        <taxon>Lysobacterales</taxon>
        <taxon>Lysobacteraceae</taxon>
        <taxon>Xylella</taxon>
    </lineage>
</organism>
<sequence length="628" mass="69214">MTWSQDLAHKTYSIRHWADGYFEVNDAGHMVVMPLGGDGVRISLPEVVDAARAAGAKLPLLLRFPDILGHRLGKLQAAFAQAQSEWEYAGGYTAVYPIKVNQHRGVAGVLASHQGDGFGLEAGSKPELMAVLALSRPGGLIVCNGYKDREYIRLALIGRKLGLKTFIVIEKPSELRMVLEEAKTLDVLPGLGVRVRLASLGAGKWQNSGGDKAKFGLSPRQVLDVWKVLRGTEYADCLNVMHFHMGSQISNVRDIAKGMREATRYFVELSRLGAKITHVDVGGGLGIDYEGTRSRSDCSINYGLQAYASHIVQPLASACEDYDLVPPRIVTECGRAMTAHHAVLIANVTEVEAVPEGRVPGVCDDEPAVVRHMREIYGELDARPAIELFYEAQHFHAEGLAAYTLGQIDLVHRARIDDLFYAISHGVRERLSHEEKSHRPVLDELNERLVDKYFVNFSVFESIPDVWAINQIFPIVPIERLNEVPTRRGVVCDLTCDSDGTVKQYVENESLDSALPLHVLRHGEAYRIGFFLVGAYQEILGDIHNLFGDTDAVEVAVDGRGYRIAQQRCGDTTDVMLDYVGYALDEVRRVYAQRIAAAGMSAAESKALSDMLEAGLTGYPYLSDVPLE</sequence>
<comment type="function">
    <text evidence="1">Catalyzes the biosynthesis of agmatine from arginine.</text>
</comment>
<comment type="catalytic activity">
    <reaction evidence="1">
        <text>L-arginine + H(+) = agmatine + CO2</text>
        <dbReference type="Rhea" id="RHEA:17641"/>
        <dbReference type="ChEBI" id="CHEBI:15378"/>
        <dbReference type="ChEBI" id="CHEBI:16526"/>
        <dbReference type="ChEBI" id="CHEBI:32682"/>
        <dbReference type="ChEBI" id="CHEBI:58145"/>
        <dbReference type="EC" id="4.1.1.19"/>
    </reaction>
</comment>
<comment type="cofactor">
    <cofactor evidence="1">
        <name>Mg(2+)</name>
        <dbReference type="ChEBI" id="CHEBI:18420"/>
    </cofactor>
</comment>
<comment type="cofactor">
    <cofactor evidence="1">
        <name>pyridoxal 5'-phosphate</name>
        <dbReference type="ChEBI" id="CHEBI:597326"/>
    </cofactor>
</comment>
<comment type="pathway">
    <text evidence="1">Amine and polyamine biosynthesis; agmatine biosynthesis; agmatine from L-arginine: step 1/1.</text>
</comment>
<comment type="similarity">
    <text evidence="1">Belongs to the Orn/Lys/Arg decarboxylase class-II family. SpeA subfamily.</text>
</comment>
<protein>
    <recommendedName>
        <fullName evidence="1">Biosynthetic arginine decarboxylase</fullName>
        <shortName evidence="1">ADC</shortName>
        <ecNumber evidence="1">4.1.1.19</ecNumber>
    </recommendedName>
</protein>
<evidence type="ECO:0000255" key="1">
    <source>
        <dbReference type="HAMAP-Rule" id="MF_01417"/>
    </source>
</evidence>
<feature type="chain" id="PRO_1000145605" description="Biosynthetic arginine decarboxylase">
    <location>
        <begin position="1"/>
        <end position="628"/>
    </location>
</feature>
<feature type="binding site" evidence="1">
    <location>
        <begin position="279"/>
        <end position="289"/>
    </location>
    <ligand>
        <name>substrate</name>
    </ligand>
</feature>
<feature type="modified residue" description="N6-(pyridoxal phosphate)lysine" evidence="1">
    <location>
        <position position="99"/>
    </location>
</feature>